<reference key="1">
    <citation type="submission" date="2006-08" db="EMBL/GenBank/DDBJ databases">
        <authorList>
            <consortium name="NIH - Mammalian Gene Collection (MGC) project"/>
        </authorList>
    </citation>
    <scope>NUCLEOTIDE SEQUENCE [LARGE SCALE MRNA]</scope>
    <source>
        <strain>Hereford</strain>
        <tissue>Hippocampus</tissue>
    </source>
</reference>
<name>GLPK_BOVIN</name>
<organism>
    <name type="scientific">Bos taurus</name>
    <name type="common">Bovine</name>
    <dbReference type="NCBI Taxonomy" id="9913"/>
    <lineage>
        <taxon>Eukaryota</taxon>
        <taxon>Metazoa</taxon>
        <taxon>Chordata</taxon>
        <taxon>Craniata</taxon>
        <taxon>Vertebrata</taxon>
        <taxon>Euteleostomi</taxon>
        <taxon>Mammalia</taxon>
        <taxon>Eutheria</taxon>
        <taxon>Laurasiatheria</taxon>
        <taxon>Artiodactyla</taxon>
        <taxon>Ruminantia</taxon>
        <taxon>Pecora</taxon>
        <taxon>Bovidae</taxon>
        <taxon>Bovinae</taxon>
        <taxon>Bos</taxon>
    </lineage>
</organism>
<dbReference type="EC" id="2.7.1.30" evidence="2"/>
<dbReference type="EMBL" id="BC122692">
    <property type="protein sequence ID" value="AAI22693.1"/>
    <property type="molecule type" value="mRNA"/>
</dbReference>
<dbReference type="RefSeq" id="NP_001068704.1">
    <property type="nucleotide sequence ID" value="NM_001075236.1"/>
</dbReference>
<dbReference type="SMR" id="Q0IID9"/>
<dbReference type="FunCoup" id="Q0IID9">
    <property type="interactions" value="1124"/>
</dbReference>
<dbReference type="STRING" id="9913.ENSBTAP00000062665"/>
<dbReference type="PaxDb" id="9913-ENSBTAP00000030898"/>
<dbReference type="PeptideAtlas" id="Q0IID9"/>
<dbReference type="GeneID" id="505987"/>
<dbReference type="KEGG" id="bta:505987"/>
<dbReference type="CTD" id="2710"/>
<dbReference type="VEuPathDB" id="HostDB:ENSBTAG00000008124"/>
<dbReference type="eggNOG" id="KOG2517">
    <property type="taxonomic scope" value="Eukaryota"/>
</dbReference>
<dbReference type="HOGENOM" id="CLU_009281_2_3_1"/>
<dbReference type="InParanoid" id="Q0IID9"/>
<dbReference type="OrthoDB" id="5422795at2759"/>
<dbReference type="TreeFam" id="TF321504"/>
<dbReference type="BRENDA" id="2.7.1.30">
    <property type="organism ID" value="908"/>
</dbReference>
<dbReference type="Reactome" id="R-BTA-75109">
    <property type="pathway name" value="Triglyceride biosynthesis"/>
</dbReference>
<dbReference type="UniPathway" id="UPA00618">
    <property type="reaction ID" value="UER00672"/>
</dbReference>
<dbReference type="Proteomes" id="UP000009136">
    <property type="component" value="Chromosome X"/>
</dbReference>
<dbReference type="Bgee" id="ENSBTAG00000008124">
    <property type="expression patterns" value="Expressed in milk and 106 other cell types or tissues"/>
</dbReference>
<dbReference type="GO" id="GO:0005829">
    <property type="term" value="C:cytosol"/>
    <property type="evidence" value="ECO:0000250"/>
    <property type="project" value="UniProtKB"/>
</dbReference>
<dbReference type="GO" id="GO:0005741">
    <property type="term" value="C:mitochondrial outer membrane"/>
    <property type="evidence" value="ECO:0007669"/>
    <property type="project" value="UniProtKB-SubCell"/>
</dbReference>
<dbReference type="GO" id="GO:0005739">
    <property type="term" value="C:mitochondrion"/>
    <property type="evidence" value="ECO:0000250"/>
    <property type="project" value="UniProtKB"/>
</dbReference>
<dbReference type="GO" id="GO:0005634">
    <property type="term" value="C:nucleus"/>
    <property type="evidence" value="ECO:0000250"/>
    <property type="project" value="UniProtKB"/>
</dbReference>
<dbReference type="GO" id="GO:0005524">
    <property type="term" value="F:ATP binding"/>
    <property type="evidence" value="ECO:0007669"/>
    <property type="project" value="UniProtKB-KW"/>
</dbReference>
<dbReference type="GO" id="GO:0004370">
    <property type="term" value="F:glycerol kinase activity"/>
    <property type="evidence" value="ECO:0000250"/>
    <property type="project" value="UniProtKB"/>
</dbReference>
<dbReference type="GO" id="GO:0046872">
    <property type="term" value="F:metal ion binding"/>
    <property type="evidence" value="ECO:0007669"/>
    <property type="project" value="UniProtKB-KW"/>
</dbReference>
<dbReference type="GO" id="GO:0019563">
    <property type="term" value="P:glycerol catabolic process"/>
    <property type="evidence" value="ECO:0007669"/>
    <property type="project" value="UniProtKB-UniPathway"/>
</dbReference>
<dbReference type="GO" id="GO:0006071">
    <property type="term" value="P:glycerol metabolic process"/>
    <property type="evidence" value="ECO:0000318"/>
    <property type="project" value="GO_Central"/>
</dbReference>
<dbReference type="GO" id="GO:0046167">
    <property type="term" value="P:glycerol-3-phosphate biosynthetic process"/>
    <property type="evidence" value="ECO:0000250"/>
    <property type="project" value="UniProtKB"/>
</dbReference>
<dbReference type="GO" id="GO:0006641">
    <property type="term" value="P:triglyceride metabolic process"/>
    <property type="evidence" value="ECO:0000318"/>
    <property type="project" value="GO_Central"/>
</dbReference>
<dbReference type="CDD" id="cd07792">
    <property type="entry name" value="ASKHA_NBD_FGGY_GK1-3-like"/>
    <property type="match status" value="1"/>
</dbReference>
<dbReference type="FunFam" id="3.30.420.40:FF:000043">
    <property type="entry name" value="glycerol kinase isoform X1"/>
    <property type="match status" value="1"/>
</dbReference>
<dbReference type="FunFam" id="3.30.420.40:FF:000033">
    <property type="entry name" value="glycerol kinase isoform X2"/>
    <property type="match status" value="1"/>
</dbReference>
<dbReference type="Gene3D" id="3.30.420.40">
    <property type="match status" value="2"/>
</dbReference>
<dbReference type="InterPro" id="IPR043129">
    <property type="entry name" value="ATPase_NBD"/>
</dbReference>
<dbReference type="InterPro" id="IPR000577">
    <property type="entry name" value="Carb_kinase_FGGY"/>
</dbReference>
<dbReference type="InterPro" id="IPR018483">
    <property type="entry name" value="Carb_kinase_FGGY_CS"/>
</dbReference>
<dbReference type="InterPro" id="IPR018485">
    <property type="entry name" value="FGGY_C"/>
</dbReference>
<dbReference type="InterPro" id="IPR018484">
    <property type="entry name" value="FGGY_N"/>
</dbReference>
<dbReference type="InterPro" id="IPR042018">
    <property type="entry name" value="GK1-3_metazoan-type"/>
</dbReference>
<dbReference type="InterPro" id="IPR005999">
    <property type="entry name" value="Glycerol_kin"/>
</dbReference>
<dbReference type="NCBIfam" id="TIGR01311">
    <property type="entry name" value="glycerol_kin"/>
    <property type="match status" value="1"/>
</dbReference>
<dbReference type="NCBIfam" id="NF000756">
    <property type="entry name" value="PRK00047.1"/>
    <property type="match status" value="1"/>
</dbReference>
<dbReference type="PANTHER" id="PTHR10196:SF56">
    <property type="entry name" value="GLYCEROL KINASE"/>
    <property type="match status" value="1"/>
</dbReference>
<dbReference type="PANTHER" id="PTHR10196">
    <property type="entry name" value="SUGAR KINASE"/>
    <property type="match status" value="1"/>
</dbReference>
<dbReference type="Pfam" id="PF02782">
    <property type="entry name" value="FGGY_C"/>
    <property type="match status" value="1"/>
</dbReference>
<dbReference type="Pfam" id="PF00370">
    <property type="entry name" value="FGGY_N"/>
    <property type="match status" value="1"/>
</dbReference>
<dbReference type="PIRSF" id="PIRSF000538">
    <property type="entry name" value="GlpK"/>
    <property type="match status" value="1"/>
</dbReference>
<dbReference type="SUPFAM" id="SSF53067">
    <property type="entry name" value="Actin-like ATPase domain"/>
    <property type="match status" value="2"/>
</dbReference>
<dbReference type="PROSITE" id="PS00933">
    <property type="entry name" value="FGGY_KINASES_1"/>
    <property type="match status" value="1"/>
</dbReference>
<dbReference type="PROSITE" id="PS00445">
    <property type="entry name" value="FGGY_KINASES_2"/>
    <property type="match status" value="1"/>
</dbReference>
<sequence>MASAKKAVLGPLVGAVDQGTSSTRFLVFNSKTAELLSHHQVEIKQEFPREGWVEQDPKEILQSVYECIEKTCEKLGQLNIDISNIKAIGVSNQRETTVVWDKLTGEPLYNAVVWLDLRTQSTVESLSKRIPGNNNFVKSKTGLPLSTYFSAVKLRWLLDNVRKVQKAVEEDRALFGTIDSWLIWSLTGGASGGVHCTDVTNASRTMLFNIHSLEWDKELCEFFEIPMKILPNVRSSSEIYGLMKISHSPKAGALEGVPISGCLGDQSAALVGQMCFQDGQAKNTYGTGCFLLCNTGRKCVFSEHGLLTTVAYKLGRDKPVYYALEGSVAIAGAVIRWLRDNLGIIKSSEEIEKLAKEVGTSYGCYFVPAFSGLYAPYWEPSARGIICGLTQFTNKCHIAFAALEAVCFQTREILDAMNRDCGIPLSHLQVDGGMTNNKILMQLQADILYIPVVKPSMPETTALGAAMAAGAAEGVGVWSLEPEDLSAVTMERFEPQINAEESEIRYSTWKKAVMKSMGWVTTQSSESGDPSIFCSLPLGFFIVSSVVMLIGARYLSGMP</sequence>
<proteinExistence type="evidence at transcript level"/>
<evidence type="ECO:0000250" key="1">
    <source>
        <dbReference type="UniProtKB" id="P0A6F3"/>
    </source>
</evidence>
<evidence type="ECO:0000250" key="2">
    <source>
        <dbReference type="UniProtKB" id="P32189"/>
    </source>
</evidence>
<evidence type="ECO:0000255" key="3"/>
<evidence type="ECO:0000305" key="4"/>
<comment type="function">
    <text evidence="2">Kinase that plays a key role in glycerol metabolism, catalyzing its phosphorylation to produce sn-glycerol 3-phosphate. Sn-glycerol 3-phosphate is a crucial intermediate in various metabolic pathways, such as the synthesis of glycerolipids and triglycerides, glycogenesis, glycolysis and gluconeogenesis.</text>
</comment>
<comment type="catalytic activity">
    <reaction evidence="2">
        <text>glycerol + ATP = sn-glycerol 3-phosphate + ADP + H(+)</text>
        <dbReference type="Rhea" id="RHEA:21644"/>
        <dbReference type="ChEBI" id="CHEBI:15378"/>
        <dbReference type="ChEBI" id="CHEBI:17754"/>
        <dbReference type="ChEBI" id="CHEBI:30616"/>
        <dbReference type="ChEBI" id="CHEBI:57597"/>
        <dbReference type="ChEBI" id="CHEBI:456216"/>
        <dbReference type="EC" id="2.7.1.30"/>
    </reaction>
    <physiologicalReaction direction="left-to-right" evidence="2">
        <dbReference type="Rhea" id="RHEA:21645"/>
    </physiologicalReaction>
</comment>
<comment type="pathway">
    <text evidence="2">Polyol metabolism; glycerol degradation via glycerol kinase pathway; sn-glycerol 3-phosphate from glycerol: step 1/1.</text>
</comment>
<comment type="subcellular location">
    <subcellularLocation>
        <location evidence="2">Mitochondrion outer membrane</location>
        <topology evidence="3">Single-pass membrane protein</topology>
    </subcellularLocation>
    <subcellularLocation>
        <location evidence="2">Nucleus</location>
    </subcellularLocation>
    <subcellularLocation>
        <location evidence="2">Cytoplasm</location>
        <location evidence="2">Cytosol</location>
    </subcellularLocation>
    <text evidence="2">Glycerol kinase activity is more cytosolic in some tissues. It probably represents the expression of isoforms lacking a transmembrane domain.</text>
</comment>
<comment type="similarity">
    <text evidence="4">Belongs to the FGGY kinase family.</text>
</comment>
<feature type="chain" id="PRO_0000343676" description="Glycerol kinase">
    <location>
        <begin position="1"/>
        <end position="559"/>
    </location>
</feature>
<feature type="transmembrane region" description="Helical" evidence="3">
    <location>
        <begin position="532"/>
        <end position="552"/>
    </location>
</feature>
<feature type="binding site" evidence="1">
    <location>
        <position position="20"/>
    </location>
    <ligand>
        <name>ADP</name>
        <dbReference type="ChEBI" id="CHEBI:456216"/>
    </ligand>
</feature>
<feature type="binding site" evidence="1">
    <location>
        <position position="20"/>
    </location>
    <ligand>
        <name>ATP</name>
        <dbReference type="ChEBI" id="CHEBI:30616"/>
    </ligand>
</feature>
<feature type="binding site" evidence="1">
    <location>
        <position position="20"/>
    </location>
    <ligand>
        <name>sn-glycerol 3-phosphate</name>
        <dbReference type="ChEBI" id="CHEBI:57597"/>
    </ligand>
</feature>
<feature type="binding site" evidence="1">
    <location>
        <position position="21"/>
    </location>
    <ligand>
        <name>ATP</name>
        <dbReference type="ChEBI" id="CHEBI:30616"/>
    </ligand>
</feature>
<feature type="binding site" evidence="1">
    <location>
        <position position="22"/>
    </location>
    <ligand>
        <name>ATP</name>
        <dbReference type="ChEBI" id="CHEBI:30616"/>
    </ligand>
</feature>
<feature type="binding site" evidence="1">
    <location>
        <position position="24"/>
    </location>
    <ligand>
        <name>ADP</name>
        <dbReference type="ChEBI" id="CHEBI:456216"/>
    </ligand>
</feature>
<feature type="binding site" evidence="1">
    <location>
        <position position="94"/>
    </location>
    <ligand>
        <name>glycerol</name>
        <dbReference type="ChEBI" id="CHEBI:17754"/>
    </ligand>
</feature>
<feature type="binding site" evidence="1">
    <location>
        <position position="94"/>
    </location>
    <ligand>
        <name>sn-glycerol 3-phosphate</name>
        <dbReference type="ChEBI" id="CHEBI:57597"/>
    </ligand>
</feature>
<feature type="binding site" evidence="1">
    <location>
        <position position="95"/>
    </location>
    <ligand>
        <name>glycerol</name>
        <dbReference type="ChEBI" id="CHEBI:17754"/>
    </ligand>
</feature>
<feature type="binding site" evidence="1">
    <location>
        <position position="95"/>
    </location>
    <ligand>
        <name>sn-glycerol 3-phosphate</name>
        <dbReference type="ChEBI" id="CHEBI:57597"/>
    </ligand>
</feature>
<feature type="binding site" evidence="1">
    <location>
        <position position="148"/>
    </location>
    <ligand>
        <name>glycerol</name>
        <dbReference type="ChEBI" id="CHEBI:17754"/>
    </ligand>
</feature>
<feature type="binding site" evidence="1">
    <location>
        <position position="148"/>
    </location>
    <ligand>
        <name>sn-glycerol 3-phosphate</name>
        <dbReference type="ChEBI" id="CHEBI:57597"/>
    </ligand>
</feature>
<feature type="binding site" evidence="1">
    <location>
        <position position="252"/>
    </location>
    <ligand>
        <name>beta-D-fructose 1,6-bisphosphate</name>
        <dbReference type="ChEBI" id="CHEBI:32966"/>
        <note>allosteric inhibitor</note>
    </ligand>
</feature>
<feature type="binding site" evidence="1">
    <location>
        <position position="265"/>
    </location>
    <ligand>
        <name>glycerol</name>
        <dbReference type="ChEBI" id="CHEBI:17754"/>
    </ligand>
</feature>
<feature type="binding site" evidence="1">
    <location>
        <position position="265"/>
    </location>
    <ligand>
        <name>sn-glycerol 3-phosphate</name>
        <dbReference type="ChEBI" id="CHEBI:57597"/>
    </ligand>
</feature>
<feature type="binding site" evidence="1">
    <location>
        <position position="266"/>
    </location>
    <ligand>
        <name>glycerol</name>
        <dbReference type="ChEBI" id="CHEBI:17754"/>
    </ligand>
</feature>
<feature type="binding site" evidence="1">
    <location>
        <position position="287"/>
    </location>
    <ligand>
        <name>ADP</name>
        <dbReference type="ChEBI" id="CHEBI:456216"/>
    </ligand>
</feature>
<feature type="binding site" evidence="1">
    <location>
        <position position="287"/>
    </location>
    <ligand>
        <name>ATP</name>
        <dbReference type="ChEBI" id="CHEBI:30616"/>
    </ligand>
</feature>
<feature type="binding site" evidence="1">
    <location>
        <position position="332"/>
    </location>
    <ligand>
        <name>ADP</name>
        <dbReference type="ChEBI" id="CHEBI:456216"/>
    </ligand>
</feature>
<feature type="binding site" evidence="1">
    <location>
        <position position="332"/>
    </location>
    <ligand>
        <name>ATP</name>
        <dbReference type="ChEBI" id="CHEBI:30616"/>
    </ligand>
</feature>
<feature type="binding site" evidence="1">
    <location>
        <position position="433"/>
    </location>
    <ligand>
        <name>ADP</name>
        <dbReference type="ChEBI" id="CHEBI:456216"/>
    </ligand>
</feature>
<feature type="binding site" evidence="1">
    <location>
        <position position="433"/>
    </location>
    <ligand>
        <name>ATP</name>
        <dbReference type="ChEBI" id="CHEBI:30616"/>
    </ligand>
</feature>
<feature type="binding site" evidence="1">
    <location>
        <position position="437"/>
    </location>
    <ligand>
        <name>ADP</name>
        <dbReference type="ChEBI" id="CHEBI:456216"/>
    </ligand>
</feature>
<feature type="binding site" evidence="1">
    <location>
        <position position="501"/>
    </location>
    <ligand>
        <name>Zn(2+)</name>
        <dbReference type="ChEBI" id="CHEBI:29105"/>
        <note>ligand shared with EIIA-Glc</note>
    </ligand>
</feature>
<gene>
    <name evidence="2" type="primary">GK</name>
</gene>
<protein>
    <recommendedName>
        <fullName evidence="4">Glycerol kinase</fullName>
        <shortName>Glycerokinase</shortName>
        <ecNumber evidence="2">2.7.1.30</ecNumber>
    </recommendedName>
    <alternativeName>
        <fullName evidence="2">ATP:glycerol 3-phosphotransferase</fullName>
    </alternativeName>
</protein>
<accession>Q0IID9</accession>
<keyword id="KW-0067">ATP-binding</keyword>
<keyword id="KW-0963">Cytoplasm</keyword>
<keyword id="KW-0319">Glycerol metabolism</keyword>
<keyword id="KW-0418">Kinase</keyword>
<keyword id="KW-0472">Membrane</keyword>
<keyword id="KW-0479">Metal-binding</keyword>
<keyword id="KW-0496">Mitochondrion</keyword>
<keyword id="KW-1000">Mitochondrion outer membrane</keyword>
<keyword id="KW-0547">Nucleotide-binding</keyword>
<keyword id="KW-0539">Nucleus</keyword>
<keyword id="KW-1185">Reference proteome</keyword>
<keyword id="KW-0808">Transferase</keyword>
<keyword id="KW-0812">Transmembrane</keyword>
<keyword id="KW-1133">Transmembrane helix</keyword>
<keyword id="KW-0862">Zinc</keyword>